<dbReference type="EC" id="2.7.4.25" evidence="1"/>
<dbReference type="EMBL" id="AE007870">
    <property type="protein sequence ID" value="AAK89328.1"/>
    <property type="molecule type" value="Genomic_DNA"/>
</dbReference>
<dbReference type="PIR" id="AI3060">
    <property type="entry name" value="AI3060"/>
</dbReference>
<dbReference type="PIR" id="F98225">
    <property type="entry name" value="F98225"/>
</dbReference>
<dbReference type="RefSeq" id="NP_356543.1">
    <property type="nucleotide sequence ID" value="NC_003063.2"/>
</dbReference>
<dbReference type="RefSeq" id="WP_010973565.1">
    <property type="nucleotide sequence ID" value="NC_003063.2"/>
</dbReference>
<dbReference type="SMR" id="Q8U8I9"/>
<dbReference type="STRING" id="176299.Atu4103"/>
<dbReference type="EnsemblBacteria" id="AAK89328">
    <property type="protein sequence ID" value="AAK89328"/>
    <property type="gene ID" value="Atu4103"/>
</dbReference>
<dbReference type="GeneID" id="1135977"/>
<dbReference type="KEGG" id="atu:Atu4103"/>
<dbReference type="PATRIC" id="fig|176299.10.peg.3921"/>
<dbReference type="eggNOG" id="COG0283">
    <property type="taxonomic scope" value="Bacteria"/>
</dbReference>
<dbReference type="HOGENOM" id="CLU_079959_0_1_5"/>
<dbReference type="OrthoDB" id="9807434at2"/>
<dbReference type="PhylomeDB" id="Q8U8I9"/>
<dbReference type="BioCyc" id="AGRO:ATU4103-MONOMER"/>
<dbReference type="Proteomes" id="UP000000813">
    <property type="component" value="Chromosome linear"/>
</dbReference>
<dbReference type="GO" id="GO:0005737">
    <property type="term" value="C:cytoplasm"/>
    <property type="evidence" value="ECO:0007669"/>
    <property type="project" value="UniProtKB-SubCell"/>
</dbReference>
<dbReference type="GO" id="GO:0005524">
    <property type="term" value="F:ATP binding"/>
    <property type="evidence" value="ECO:0007669"/>
    <property type="project" value="UniProtKB-UniRule"/>
</dbReference>
<dbReference type="GO" id="GO:0036430">
    <property type="term" value="F:CMP kinase activity"/>
    <property type="evidence" value="ECO:0007669"/>
    <property type="project" value="RHEA"/>
</dbReference>
<dbReference type="GO" id="GO:0036431">
    <property type="term" value="F:dCMP kinase activity"/>
    <property type="evidence" value="ECO:0007669"/>
    <property type="project" value="RHEA"/>
</dbReference>
<dbReference type="GO" id="GO:0006220">
    <property type="term" value="P:pyrimidine nucleotide metabolic process"/>
    <property type="evidence" value="ECO:0007669"/>
    <property type="project" value="UniProtKB-UniRule"/>
</dbReference>
<dbReference type="CDD" id="cd02020">
    <property type="entry name" value="CMPK"/>
    <property type="match status" value="1"/>
</dbReference>
<dbReference type="Gene3D" id="3.40.50.300">
    <property type="entry name" value="P-loop containing nucleotide triphosphate hydrolases"/>
    <property type="match status" value="1"/>
</dbReference>
<dbReference type="HAMAP" id="MF_00238">
    <property type="entry name" value="Cytidyl_kinase_type1"/>
    <property type="match status" value="1"/>
</dbReference>
<dbReference type="InterPro" id="IPR003136">
    <property type="entry name" value="Cytidylate_kin"/>
</dbReference>
<dbReference type="InterPro" id="IPR011994">
    <property type="entry name" value="Cytidylate_kinase_dom"/>
</dbReference>
<dbReference type="InterPro" id="IPR027417">
    <property type="entry name" value="P-loop_NTPase"/>
</dbReference>
<dbReference type="NCBIfam" id="TIGR00017">
    <property type="entry name" value="cmk"/>
    <property type="match status" value="1"/>
</dbReference>
<dbReference type="Pfam" id="PF02224">
    <property type="entry name" value="Cytidylate_kin"/>
    <property type="match status" value="1"/>
</dbReference>
<dbReference type="SUPFAM" id="SSF52540">
    <property type="entry name" value="P-loop containing nucleoside triphosphate hydrolases"/>
    <property type="match status" value="1"/>
</dbReference>
<gene>
    <name evidence="1" type="primary">cmk</name>
    <name type="ordered locus">Atu4103</name>
    <name type="ORF">AGR_L_1498</name>
</gene>
<proteinExistence type="inferred from homology"/>
<feature type="chain" id="PRO_0000131870" description="Cytidylate kinase">
    <location>
        <begin position="1"/>
        <end position="210"/>
    </location>
</feature>
<feature type="binding site" evidence="1">
    <location>
        <begin position="9"/>
        <end position="17"/>
    </location>
    <ligand>
        <name>ATP</name>
        <dbReference type="ChEBI" id="CHEBI:30616"/>
    </ligand>
</feature>
<reference key="1">
    <citation type="journal article" date="2001" name="Science">
        <title>The genome of the natural genetic engineer Agrobacterium tumefaciens C58.</title>
        <authorList>
            <person name="Wood D.W."/>
            <person name="Setubal J.C."/>
            <person name="Kaul R."/>
            <person name="Monks D.E."/>
            <person name="Kitajima J.P."/>
            <person name="Okura V.K."/>
            <person name="Zhou Y."/>
            <person name="Chen L."/>
            <person name="Wood G.E."/>
            <person name="Almeida N.F. Jr."/>
            <person name="Woo L."/>
            <person name="Chen Y."/>
            <person name="Paulsen I.T."/>
            <person name="Eisen J.A."/>
            <person name="Karp P.D."/>
            <person name="Bovee D. Sr."/>
            <person name="Chapman P."/>
            <person name="Clendenning J."/>
            <person name="Deatherage G."/>
            <person name="Gillet W."/>
            <person name="Grant C."/>
            <person name="Kutyavin T."/>
            <person name="Levy R."/>
            <person name="Li M.-J."/>
            <person name="McClelland E."/>
            <person name="Palmieri A."/>
            <person name="Raymond C."/>
            <person name="Rouse G."/>
            <person name="Saenphimmachak C."/>
            <person name="Wu Z."/>
            <person name="Romero P."/>
            <person name="Gordon D."/>
            <person name="Zhang S."/>
            <person name="Yoo H."/>
            <person name="Tao Y."/>
            <person name="Biddle P."/>
            <person name="Jung M."/>
            <person name="Krespan W."/>
            <person name="Perry M."/>
            <person name="Gordon-Kamm B."/>
            <person name="Liao L."/>
            <person name="Kim S."/>
            <person name="Hendrick C."/>
            <person name="Zhao Z.-Y."/>
            <person name="Dolan M."/>
            <person name="Chumley F."/>
            <person name="Tingey S.V."/>
            <person name="Tomb J.-F."/>
            <person name="Gordon M.P."/>
            <person name="Olson M.V."/>
            <person name="Nester E.W."/>
        </authorList>
    </citation>
    <scope>NUCLEOTIDE SEQUENCE [LARGE SCALE GENOMIC DNA]</scope>
    <source>
        <strain>C58 / ATCC 33970</strain>
    </source>
</reference>
<reference key="2">
    <citation type="journal article" date="2001" name="Science">
        <title>Genome sequence of the plant pathogen and biotechnology agent Agrobacterium tumefaciens C58.</title>
        <authorList>
            <person name="Goodner B."/>
            <person name="Hinkle G."/>
            <person name="Gattung S."/>
            <person name="Miller N."/>
            <person name="Blanchard M."/>
            <person name="Qurollo B."/>
            <person name="Goldman B.S."/>
            <person name="Cao Y."/>
            <person name="Askenazi M."/>
            <person name="Halling C."/>
            <person name="Mullin L."/>
            <person name="Houmiel K."/>
            <person name="Gordon J."/>
            <person name="Vaudin M."/>
            <person name="Iartchouk O."/>
            <person name="Epp A."/>
            <person name="Liu F."/>
            <person name="Wollam C."/>
            <person name="Allinger M."/>
            <person name="Doughty D."/>
            <person name="Scott C."/>
            <person name="Lappas C."/>
            <person name="Markelz B."/>
            <person name="Flanagan C."/>
            <person name="Crowell C."/>
            <person name="Gurson J."/>
            <person name="Lomo C."/>
            <person name="Sear C."/>
            <person name="Strub G."/>
            <person name="Cielo C."/>
            <person name="Slater S."/>
        </authorList>
    </citation>
    <scope>NUCLEOTIDE SEQUENCE [LARGE SCALE GENOMIC DNA]</scope>
    <source>
        <strain>C58 / ATCC 33970</strain>
    </source>
</reference>
<evidence type="ECO:0000255" key="1">
    <source>
        <dbReference type="HAMAP-Rule" id="MF_00238"/>
    </source>
</evidence>
<organism>
    <name type="scientific">Agrobacterium fabrum (strain C58 / ATCC 33970)</name>
    <name type="common">Agrobacterium tumefaciens (strain C58)</name>
    <dbReference type="NCBI Taxonomy" id="176299"/>
    <lineage>
        <taxon>Bacteria</taxon>
        <taxon>Pseudomonadati</taxon>
        <taxon>Pseudomonadota</taxon>
        <taxon>Alphaproteobacteria</taxon>
        <taxon>Hyphomicrobiales</taxon>
        <taxon>Rhizobiaceae</taxon>
        <taxon>Rhizobium/Agrobacterium group</taxon>
        <taxon>Agrobacterium</taxon>
        <taxon>Agrobacterium tumefaciens complex</taxon>
    </lineage>
</organism>
<accession>Q8U8I9</accession>
<keyword id="KW-0067">ATP-binding</keyword>
<keyword id="KW-0963">Cytoplasm</keyword>
<keyword id="KW-0418">Kinase</keyword>
<keyword id="KW-0547">Nucleotide-binding</keyword>
<keyword id="KW-1185">Reference proteome</keyword>
<keyword id="KW-0808">Transferase</keyword>
<name>KCY_AGRFC</name>
<sequence length="210" mass="22620">MTFTIAIDGPAAAGKGTLSRKIAETYGFHHLDTGLTYRATAKALLDAGLPLDNEAVAEKMALELDLAGLDRAVLSRHEIGEAASKIAVMTPVRRALVKAQKLFAMREPGTVLDGRDIGTVVCPDAPVKLYVTASADVRARRRYDEILANGGNGDYDAIFAEVKKRDERDMGRADSPLRPAEDAHLLDTSEMSIEAAFQAARTIIDAALKR</sequence>
<protein>
    <recommendedName>
        <fullName evidence="1">Cytidylate kinase</fullName>
        <shortName evidence="1">CK</shortName>
        <ecNumber evidence="1">2.7.4.25</ecNumber>
    </recommendedName>
    <alternativeName>
        <fullName evidence="1">Cytidine monophosphate kinase</fullName>
        <shortName evidence="1">CMP kinase</shortName>
    </alternativeName>
</protein>
<comment type="catalytic activity">
    <reaction evidence="1">
        <text>CMP + ATP = CDP + ADP</text>
        <dbReference type="Rhea" id="RHEA:11600"/>
        <dbReference type="ChEBI" id="CHEBI:30616"/>
        <dbReference type="ChEBI" id="CHEBI:58069"/>
        <dbReference type="ChEBI" id="CHEBI:60377"/>
        <dbReference type="ChEBI" id="CHEBI:456216"/>
        <dbReference type="EC" id="2.7.4.25"/>
    </reaction>
</comment>
<comment type="catalytic activity">
    <reaction evidence="1">
        <text>dCMP + ATP = dCDP + ADP</text>
        <dbReference type="Rhea" id="RHEA:25094"/>
        <dbReference type="ChEBI" id="CHEBI:30616"/>
        <dbReference type="ChEBI" id="CHEBI:57566"/>
        <dbReference type="ChEBI" id="CHEBI:58593"/>
        <dbReference type="ChEBI" id="CHEBI:456216"/>
        <dbReference type="EC" id="2.7.4.25"/>
    </reaction>
</comment>
<comment type="subcellular location">
    <subcellularLocation>
        <location evidence="1">Cytoplasm</location>
    </subcellularLocation>
</comment>
<comment type="similarity">
    <text evidence="1">Belongs to the cytidylate kinase family. Type 1 subfamily.</text>
</comment>